<organism>
    <name type="scientific">Helicobacter pylori (strain P12)</name>
    <dbReference type="NCBI Taxonomy" id="570508"/>
    <lineage>
        <taxon>Bacteria</taxon>
        <taxon>Pseudomonadati</taxon>
        <taxon>Campylobacterota</taxon>
        <taxon>Epsilonproteobacteria</taxon>
        <taxon>Campylobacterales</taxon>
        <taxon>Helicobacteraceae</taxon>
        <taxon>Helicobacter</taxon>
    </lineage>
</organism>
<sequence length="93" mass="10454">MADIMDIKSILYTEKSLGLQEKGVLVVQTAQNVTKNQLKEVFKTYFGFEPLKINSLKQEGKVKRFRGKLGQRKSFKKFYVKVPEGASIAALGA</sequence>
<feature type="chain" id="PRO_1000144573" description="Large ribosomal subunit protein uL23">
    <location>
        <begin position="1"/>
        <end position="93"/>
    </location>
</feature>
<comment type="function">
    <text evidence="1">One of the early assembly proteins it binds 23S rRNA. One of the proteins that surrounds the polypeptide exit tunnel on the outside of the ribosome. Forms the main docking site for trigger factor binding to the ribosome.</text>
</comment>
<comment type="subunit">
    <text evidence="1">Part of the 50S ribosomal subunit. Contacts protein L29, and trigger factor when it is bound to the ribosome.</text>
</comment>
<comment type="similarity">
    <text evidence="1">Belongs to the universal ribosomal protein uL23 family.</text>
</comment>
<protein>
    <recommendedName>
        <fullName evidence="1">Large ribosomal subunit protein uL23</fullName>
    </recommendedName>
    <alternativeName>
        <fullName evidence="2">50S ribosomal protein L23</fullName>
    </alternativeName>
</protein>
<keyword id="KW-0687">Ribonucleoprotein</keyword>
<keyword id="KW-0689">Ribosomal protein</keyword>
<keyword id="KW-0694">RNA-binding</keyword>
<keyword id="KW-0699">rRNA-binding</keyword>
<gene>
    <name evidence="1" type="primary">rplW</name>
    <name type="ordered locus">HPP12_1281</name>
</gene>
<dbReference type="EMBL" id="CP001217">
    <property type="protein sequence ID" value="ACJ08433.1"/>
    <property type="molecule type" value="Genomic_DNA"/>
</dbReference>
<dbReference type="SMR" id="B6JNF5"/>
<dbReference type="KEGG" id="hpp:HPP12_1281"/>
<dbReference type="HOGENOM" id="CLU_037562_3_1_7"/>
<dbReference type="Proteomes" id="UP000008198">
    <property type="component" value="Chromosome"/>
</dbReference>
<dbReference type="GO" id="GO:1990904">
    <property type="term" value="C:ribonucleoprotein complex"/>
    <property type="evidence" value="ECO:0007669"/>
    <property type="project" value="UniProtKB-KW"/>
</dbReference>
<dbReference type="GO" id="GO:0005840">
    <property type="term" value="C:ribosome"/>
    <property type="evidence" value="ECO:0007669"/>
    <property type="project" value="UniProtKB-KW"/>
</dbReference>
<dbReference type="GO" id="GO:0019843">
    <property type="term" value="F:rRNA binding"/>
    <property type="evidence" value="ECO:0007669"/>
    <property type="project" value="UniProtKB-UniRule"/>
</dbReference>
<dbReference type="GO" id="GO:0003735">
    <property type="term" value="F:structural constituent of ribosome"/>
    <property type="evidence" value="ECO:0007669"/>
    <property type="project" value="InterPro"/>
</dbReference>
<dbReference type="GO" id="GO:0006412">
    <property type="term" value="P:translation"/>
    <property type="evidence" value="ECO:0007669"/>
    <property type="project" value="UniProtKB-UniRule"/>
</dbReference>
<dbReference type="Gene3D" id="3.30.70.330">
    <property type="match status" value="1"/>
</dbReference>
<dbReference type="HAMAP" id="MF_01369_B">
    <property type="entry name" value="Ribosomal_uL23_B"/>
    <property type="match status" value="1"/>
</dbReference>
<dbReference type="InterPro" id="IPR012677">
    <property type="entry name" value="Nucleotide-bd_a/b_plait_sf"/>
</dbReference>
<dbReference type="InterPro" id="IPR013025">
    <property type="entry name" value="Ribosomal_uL23-like"/>
</dbReference>
<dbReference type="InterPro" id="IPR012678">
    <property type="entry name" value="Ribosomal_uL23/eL15/eS24_sf"/>
</dbReference>
<dbReference type="NCBIfam" id="NF004362">
    <property type="entry name" value="PRK05738.2-2"/>
    <property type="match status" value="1"/>
</dbReference>
<dbReference type="Pfam" id="PF00276">
    <property type="entry name" value="Ribosomal_L23"/>
    <property type="match status" value="1"/>
</dbReference>
<dbReference type="SUPFAM" id="SSF54189">
    <property type="entry name" value="Ribosomal proteins S24e, L23 and L15e"/>
    <property type="match status" value="1"/>
</dbReference>
<evidence type="ECO:0000255" key="1">
    <source>
        <dbReference type="HAMAP-Rule" id="MF_01369"/>
    </source>
</evidence>
<evidence type="ECO:0000305" key="2"/>
<name>RL23_HELP2</name>
<accession>B6JNF5</accession>
<proteinExistence type="inferred from homology"/>
<reference key="1">
    <citation type="submission" date="2008-10" db="EMBL/GenBank/DDBJ databases">
        <title>The complete genome sequence of Helicobacter pylori strain P12.</title>
        <authorList>
            <person name="Fischer W."/>
            <person name="Windhager L."/>
            <person name="Karnholz A."/>
            <person name="Zeiller M."/>
            <person name="Zimmer R."/>
            <person name="Haas R."/>
        </authorList>
    </citation>
    <scope>NUCLEOTIDE SEQUENCE [LARGE SCALE GENOMIC DNA]</scope>
    <source>
        <strain>P12</strain>
    </source>
</reference>